<keyword id="KW-0029">Amino-acid transport</keyword>
<keyword id="KW-0067">ATP-binding</keyword>
<keyword id="KW-1003">Cell membrane</keyword>
<keyword id="KW-0472">Membrane</keyword>
<keyword id="KW-0547">Nucleotide-binding</keyword>
<keyword id="KW-1185">Reference proteome</keyword>
<keyword id="KW-1278">Translocase</keyword>
<keyword id="KW-0813">Transport</keyword>
<sequence length="247" mass="27748">MLTVKGLNKSFGENEILKKIDMKIEKGKVIAILGPSGSGKTTLLRCLNALEIPNRGELAFDDFSIDFSKKVKQADILKLRRKSGMVFQAYHLFPHRTALENVMEGPVQVQKRNKEEVRKEAIQLLDKVGLKDKMDLYPFQLSGGQQQRVGIARALAIQPELMLFDEPTSALDPELVGEVLKVIKDLANEGWTMVVVTHEIKFAQEVADEVIFIDGGVIVEQGPPEQIFSAPKEERTQRFLNRILNPL</sequence>
<evidence type="ECO:0000255" key="1">
    <source>
        <dbReference type="PROSITE-ProRule" id="PRU00434"/>
    </source>
</evidence>
<evidence type="ECO:0000305" key="2"/>
<evidence type="ECO:0000305" key="3">
    <source>
    </source>
</evidence>
<organism>
    <name type="scientific">Bacillus subtilis (strain 168)</name>
    <dbReference type="NCBI Taxonomy" id="224308"/>
    <lineage>
        <taxon>Bacteria</taxon>
        <taxon>Bacillati</taxon>
        <taxon>Bacillota</taxon>
        <taxon>Bacilli</taxon>
        <taxon>Bacillales</taxon>
        <taxon>Bacillaceae</taxon>
        <taxon>Bacillus</taxon>
    </lineage>
</organism>
<proteinExistence type="evidence at protein level"/>
<name>TCYC_BACSU</name>
<gene>
    <name type="primary">tcyC</name>
    <name type="synonym">yckI</name>
    <name type="ordered locus">BSU03590</name>
</gene>
<reference key="1">
    <citation type="journal article" date="1995" name="Microbiology">
        <title>An operon encoding a novel ABC-type transport system in Bacillus subtilis.</title>
        <authorList>
            <person name="Rodriguez F."/>
            <person name="Grandi G."/>
        </authorList>
    </citation>
    <scope>NUCLEOTIDE SEQUENCE [GENOMIC DNA]</scope>
    <source>
        <strain>168 / JH642</strain>
    </source>
</reference>
<reference key="2">
    <citation type="journal article" date="1993" name="J. Bacteriol.">
        <title>Isolation and characterization of Bacillus subtilis genes involved in siderophore biosynthesis: relationship between B. subtilis sfpo and Escherichia coli entD genes.</title>
        <authorList>
            <person name="Grossman T.H."/>
            <person name="Tuckman M."/>
            <person name="Ellestad S."/>
            <person name="Osburne M.S."/>
        </authorList>
    </citation>
    <scope>NUCLEOTIDE SEQUENCE [GENOMIC DNA]</scope>
</reference>
<reference key="3">
    <citation type="journal article" date="1996" name="Microbiology">
        <title>The 25 degrees-36 degrees region of the Bacillus subtilis chromosome: determination of the sequence of a 146 kb segment and identification of 113 genes.</title>
        <authorList>
            <person name="Yamane K."/>
            <person name="Kumano M."/>
            <person name="Kurita K."/>
        </authorList>
    </citation>
    <scope>NUCLEOTIDE SEQUENCE [GENOMIC DNA]</scope>
    <source>
        <strain>168</strain>
    </source>
</reference>
<reference key="4">
    <citation type="journal article" date="1997" name="Nature">
        <title>The complete genome sequence of the Gram-positive bacterium Bacillus subtilis.</title>
        <authorList>
            <person name="Kunst F."/>
            <person name="Ogasawara N."/>
            <person name="Moszer I."/>
            <person name="Albertini A.M."/>
            <person name="Alloni G."/>
            <person name="Azevedo V."/>
            <person name="Bertero M.G."/>
            <person name="Bessieres P."/>
            <person name="Bolotin A."/>
            <person name="Borchert S."/>
            <person name="Borriss R."/>
            <person name="Boursier L."/>
            <person name="Brans A."/>
            <person name="Braun M."/>
            <person name="Brignell S.C."/>
            <person name="Bron S."/>
            <person name="Brouillet S."/>
            <person name="Bruschi C.V."/>
            <person name="Caldwell B."/>
            <person name="Capuano V."/>
            <person name="Carter N.M."/>
            <person name="Choi S.-K."/>
            <person name="Codani J.-J."/>
            <person name="Connerton I.F."/>
            <person name="Cummings N.J."/>
            <person name="Daniel R.A."/>
            <person name="Denizot F."/>
            <person name="Devine K.M."/>
            <person name="Duesterhoeft A."/>
            <person name="Ehrlich S.D."/>
            <person name="Emmerson P.T."/>
            <person name="Entian K.-D."/>
            <person name="Errington J."/>
            <person name="Fabret C."/>
            <person name="Ferrari E."/>
            <person name="Foulger D."/>
            <person name="Fritz C."/>
            <person name="Fujita M."/>
            <person name="Fujita Y."/>
            <person name="Fuma S."/>
            <person name="Galizzi A."/>
            <person name="Galleron N."/>
            <person name="Ghim S.-Y."/>
            <person name="Glaser P."/>
            <person name="Goffeau A."/>
            <person name="Golightly E.J."/>
            <person name="Grandi G."/>
            <person name="Guiseppi G."/>
            <person name="Guy B.J."/>
            <person name="Haga K."/>
            <person name="Haiech J."/>
            <person name="Harwood C.R."/>
            <person name="Henaut A."/>
            <person name="Hilbert H."/>
            <person name="Holsappel S."/>
            <person name="Hosono S."/>
            <person name="Hullo M.-F."/>
            <person name="Itaya M."/>
            <person name="Jones L.-M."/>
            <person name="Joris B."/>
            <person name="Karamata D."/>
            <person name="Kasahara Y."/>
            <person name="Klaerr-Blanchard M."/>
            <person name="Klein C."/>
            <person name="Kobayashi Y."/>
            <person name="Koetter P."/>
            <person name="Koningstein G."/>
            <person name="Krogh S."/>
            <person name="Kumano M."/>
            <person name="Kurita K."/>
            <person name="Lapidus A."/>
            <person name="Lardinois S."/>
            <person name="Lauber J."/>
            <person name="Lazarevic V."/>
            <person name="Lee S.-M."/>
            <person name="Levine A."/>
            <person name="Liu H."/>
            <person name="Masuda S."/>
            <person name="Mauel C."/>
            <person name="Medigue C."/>
            <person name="Medina N."/>
            <person name="Mellado R.P."/>
            <person name="Mizuno M."/>
            <person name="Moestl D."/>
            <person name="Nakai S."/>
            <person name="Noback M."/>
            <person name="Noone D."/>
            <person name="O'Reilly M."/>
            <person name="Ogawa K."/>
            <person name="Ogiwara A."/>
            <person name="Oudega B."/>
            <person name="Park S.-H."/>
            <person name="Parro V."/>
            <person name="Pohl T.M."/>
            <person name="Portetelle D."/>
            <person name="Porwollik S."/>
            <person name="Prescott A.M."/>
            <person name="Presecan E."/>
            <person name="Pujic P."/>
            <person name="Purnelle B."/>
            <person name="Rapoport G."/>
            <person name="Rey M."/>
            <person name="Reynolds S."/>
            <person name="Rieger M."/>
            <person name="Rivolta C."/>
            <person name="Rocha E."/>
            <person name="Roche B."/>
            <person name="Rose M."/>
            <person name="Sadaie Y."/>
            <person name="Sato T."/>
            <person name="Scanlan E."/>
            <person name="Schleich S."/>
            <person name="Schroeter R."/>
            <person name="Scoffone F."/>
            <person name="Sekiguchi J."/>
            <person name="Sekowska A."/>
            <person name="Seror S.J."/>
            <person name="Serror P."/>
            <person name="Shin B.-S."/>
            <person name="Soldo B."/>
            <person name="Sorokin A."/>
            <person name="Tacconi E."/>
            <person name="Takagi T."/>
            <person name="Takahashi H."/>
            <person name="Takemaru K."/>
            <person name="Takeuchi M."/>
            <person name="Tamakoshi A."/>
            <person name="Tanaka T."/>
            <person name="Terpstra P."/>
            <person name="Tognoni A."/>
            <person name="Tosato V."/>
            <person name="Uchiyama S."/>
            <person name="Vandenbol M."/>
            <person name="Vannier F."/>
            <person name="Vassarotti A."/>
            <person name="Viari A."/>
            <person name="Wambutt R."/>
            <person name="Wedler E."/>
            <person name="Wedler H."/>
            <person name="Weitzenegger T."/>
            <person name="Winters P."/>
            <person name="Wipat A."/>
            <person name="Yamamoto H."/>
            <person name="Yamane K."/>
            <person name="Yasumoto K."/>
            <person name="Yata K."/>
            <person name="Yoshida K."/>
            <person name="Yoshikawa H.-F."/>
            <person name="Zumstein E."/>
            <person name="Yoshikawa H."/>
            <person name="Danchin A."/>
        </authorList>
    </citation>
    <scope>NUCLEOTIDE SEQUENCE [LARGE SCALE GENOMIC DNA]</scope>
    <source>
        <strain>168</strain>
    </source>
</reference>
<reference key="5">
    <citation type="journal article" date="2009" name="Microbiology">
        <title>From a consortium sequence to a unified sequence: the Bacillus subtilis 168 reference genome a decade later.</title>
        <authorList>
            <person name="Barbe V."/>
            <person name="Cruveiller S."/>
            <person name="Kunst F."/>
            <person name="Lenoble P."/>
            <person name="Meurice G."/>
            <person name="Sekowska A."/>
            <person name="Vallenet D."/>
            <person name="Wang T."/>
            <person name="Moszer I."/>
            <person name="Medigue C."/>
            <person name="Danchin A."/>
        </authorList>
    </citation>
    <scope>SEQUENCE REVISION TO 84</scope>
</reference>
<reference key="6">
    <citation type="journal article" date="1993" name="Mol. Microbiol.">
        <title>Sequence and analysis of the genetic locus responsible for surfactin synthesis in Bacillus subtilis.</title>
        <authorList>
            <person name="Cosmina P."/>
            <person name="Rodriguez F."/>
            <person name="de Ferra F."/>
            <person name="Grandi G."/>
            <person name="Perego M."/>
            <person name="Venema G."/>
            <person name="van Sinderen D."/>
        </authorList>
    </citation>
    <scope>NUCLEOTIDE SEQUENCE [GENOMIC DNA] OF 66-247</scope>
    <source>
        <strain>168 / JH642</strain>
    </source>
</reference>
<reference key="7">
    <citation type="journal article" date="2004" name="J. Bacteriol.">
        <title>Three different systems participate in L-cystine uptake in Bacillus subtilis.</title>
        <authorList>
            <person name="Burguiere P."/>
            <person name="Auger S."/>
            <person name="Hullo M.-F."/>
            <person name="Danchin A."/>
            <person name="Martin-Verstraete I."/>
        </authorList>
    </citation>
    <scope>FUNCTION IN L-CYSTINE TRANSPORT</scope>
    <source>
        <strain>168</strain>
    </source>
</reference>
<feature type="chain" id="PRO_0000093138" description="L-cystine import ATP-binding protein TcyC">
    <location>
        <begin position="1"/>
        <end position="247"/>
    </location>
</feature>
<feature type="domain" description="ABC transporter" evidence="1">
    <location>
        <begin position="2"/>
        <end position="240"/>
    </location>
</feature>
<feature type="binding site" evidence="1">
    <location>
        <begin position="34"/>
        <end position="41"/>
    </location>
    <ligand>
        <name>ATP</name>
        <dbReference type="ChEBI" id="CHEBI:30616"/>
    </ligand>
</feature>
<feature type="sequence conflict" description="In Ref. 2; AAC36828." evidence="2" ref="2">
    <original>KQADILKLRRKSGMVFQAYHLF</original>
    <variation>NRRISKASPKIRNGVSGVSPV</variation>
    <location>
        <begin position="72"/>
        <end position="93"/>
    </location>
</feature>
<feature type="sequence conflict" description="In Ref. 3; BAA08992 and 6; X70356." evidence="2" ref="3 6">
    <original>G</original>
    <variation>P</variation>
    <location>
        <position position="84"/>
    </location>
</feature>
<dbReference type="EC" id="7.4.2.-"/>
<dbReference type="EMBL" id="X77636">
    <property type="protein sequence ID" value="CAA54726.1"/>
    <property type="molecule type" value="Genomic_DNA"/>
</dbReference>
<dbReference type="EMBL" id="L17438">
    <property type="protein sequence ID" value="AAC36828.1"/>
    <property type="molecule type" value="Unassigned_DNA"/>
</dbReference>
<dbReference type="EMBL" id="D50453">
    <property type="protein sequence ID" value="BAA08992.1"/>
    <property type="molecule type" value="Genomic_DNA"/>
</dbReference>
<dbReference type="EMBL" id="AL009126">
    <property type="protein sequence ID" value="CAB12153.2"/>
    <property type="molecule type" value="Genomic_DNA"/>
</dbReference>
<dbReference type="EMBL" id="X70356">
    <property type="status" value="NOT_ANNOTATED_CDS"/>
    <property type="molecule type" value="Genomic_DNA"/>
</dbReference>
<dbReference type="PIR" id="C69761">
    <property type="entry name" value="C69761"/>
</dbReference>
<dbReference type="RefSeq" id="NP_388241.2">
    <property type="nucleotide sequence ID" value="NC_000964.3"/>
</dbReference>
<dbReference type="RefSeq" id="WP_003246629.1">
    <property type="nucleotide sequence ID" value="NZ_OZ025638.1"/>
</dbReference>
<dbReference type="SMR" id="P39456"/>
<dbReference type="FunCoup" id="P39456">
    <property type="interactions" value="459"/>
</dbReference>
<dbReference type="STRING" id="224308.BSU03590"/>
<dbReference type="TCDB" id="3.A.1.3.14">
    <property type="family name" value="the atp-binding cassette (abc) superfamily"/>
</dbReference>
<dbReference type="PaxDb" id="224308-BSU03590"/>
<dbReference type="EnsemblBacteria" id="CAB12153">
    <property type="protein sequence ID" value="CAB12153"/>
    <property type="gene ID" value="BSU_03590"/>
</dbReference>
<dbReference type="GeneID" id="938294"/>
<dbReference type="KEGG" id="bsu:BSU03590"/>
<dbReference type="PATRIC" id="fig|224308.179.peg.378"/>
<dbReference type="eggNOG" id="COG1126">
    <property type="taxonomic scope" value="Bacteria"/>
</dbReference>
<dbReference type="InParanoid" id="P39456"/>
<dbReference type="OrthoDB" id="9802185at2"/>
<dbReference type="PhylomeDB" id="P39456"/>
<dbReference type="BioCyc" id="BSUB:BSU03590-MONOMER"/>
<dbReference type="Proteomes" id="UP000001570">
    <property type="component" value="Chromosome"/>
</dbReference>
<dbReference type="GO" id="GO:0005886">
    <property type="term" value="C:plasma membrane"/>
    <property type="evidence" value="ECO:0007669"/>
    <property type="project" value="UniProtKB-SubCell"/>
</dbReference>
<dbReference type="GO" id="GO:0015424">
    <property type="term" value="F:ABC-type amino acid transporter activity"/>
    <property type="evidence" value="ECO:0007669"/>
    <property type="project" value="InterPro"/>
</dbReference>
<dbReference type="GO" id="GO:0005524">
    <property type="term" value="F:ATP binding"/>
    <property type="evidence" value="ECO:0007669"/>
    <property type="project" value="UniProtKB-KW"/>
</dbReference>
<dbReference type="GO" id="GO:0016887">
    <property type="term" value="F:ATP hydrolysis activity"/>
    <property type="evidence" value="ECO:0007669"/>
    <property type="project" value="InterPro"/>
</dbReference>
<dbReference type="CDD" id="cd03262">
    <property type="entry name" value="ABC_HisP_GlnQ"/>
    <property type="match status" value="1"/>
</dbReference>
<dbReference type="FunFam" id="3.40.50.300:FF:000020">
    <property type="entry name" value="Amino acid ABC transporter ATP-binding component"/>
    <property type="match status" value="1"/>
</dbReference>
<dbReference type="Gene3D" id="3.40.50.300">
    <property type="entry name" value="P-loop containing nucleotide triphosphate hydrolases"/>
    <property type="match status" value="1"/>
</dbReference>
<dbReference type="InterPro" id="IPR003593">
    <property type="entry name" value="AAA+_ATPase"/>
</dbReference>
<dbReference type="InterPro" id="IPR030679">
    <property type="entry name" value="ABC_ATPase_HisP-typ"/>
</dbReference>
<dbReference type="InterPro" id="IPR003439">
    <property type="entry name" value="ABC_transporter-like_ATP-bd"/>
</dbReference>
<dbReference type="InterPro" id="IPR017871">
    <property type="entry name" value="ABC_transporter-like_CS"/>
</dbReference>
<dbReference type="InterPro" id="IPR050086">
    <property type="entry name" value="MetN_ABC_transporter-like"/>
</dbReference>
<dbReference type="InterPro" id="IPR027417">
    <property type="entry name" value="P-loop_NTPase"/>
</dbReference>
<dbReference type="PANTHER" id="PTHR43166">
    <property type="entry name" value="AMINO ACID IMPORT ATP-BINDING PROTEIN"/>
    <property type="match status" value="1"/>
</dbReference>
<dbReference type="PANTHER" id="PTHR43166:SF35">
    <property type="entry name" value="L-CYSTINE IMPORT ATP-BINDING PROTEIN TCYN"/>
    <property type="match status" value="1"/>
</dbReference>
<dbReference type="Pfam" id="PF00005">
    <property type="entry name" value="ABC_tran"/>
    <property type="match status" value="1"/>
</dbReference>
<dbReference type="PIRSF" id="PIRSF039085">
    <property type="entry name" value="ABC_ATPase_HisP"/>
    <property type="match status" value="1"/>
</dbReference>
<dbReference type="SMART" id="SM00382">
    <property type="entry name" value="AAA"/>
    <property type="match status" value="1"/>
</dbReference>
<dbReference type="SUPFAM" id="SSF52540">
    <property type="entry name" value="P-loop containing nucleoside triphosphate hydrolases"/>
    <property type="match status" value="1"/>
</dbReference>
<dbReference type="PROSITE" id="PS00211">
    <property type="entry name" value="ABC_TRANSPORTER_1"/>
    <property type="match status" value="1"/>
</dbReference>
<dbReference type="PROSITE" id="PS50893">
    <property type="entry name" value="ABC_TRANSPORTER_2"/>
    <property type="match status" value="1"/>
</dbReference>
<accession>P39456</accession>
<comment type="function">
    <text evidence="3">Part of the ABC transporter complex TcyABC involved in L-cystine import. Responsible for energy coupling to the transport system (Probable).</text>
</comment>
<comment type="subunit">
    <text evidence="2">The complex is composed of two ATP-binding proteins (TcyC), two transmembrane proteins (TcyB) and a solute-binding protein (TcyA).</text>
</comment>
<comment type="subcellular location">
    <subcellularLocation>
        <location evidence="2">Cell membrane</location>
        <topology evidence="2">Peripheral membrane protein</topology>
    </subcellularLocation>
</comment>
<comment type="similarity">
    <text evidence="2">Belongs to the ABC transporter superfamily. L-cystine importer (TC 3.A.1.3.14) family.</text>
</comment>
<protein>
    <recommendedName>
        <fullName>L-cystine import ATP-binding protein TcyC</fullName>
        <ecNumber>7.4.2.-</ecNumber>
    </recommendedName>
</protein>